<evidence type="ECO:0000255" key="1">
    <source>
        <dbReference type="HAMAP-Rule" id="MF_01358"/>
    </source>
</evidence>
<proteinExistence type="inferred from homology"/>
<keyword id="KW-0997">Cell inner membrane</keyword>
<keyword id="KW-1003">Cell membrane</keyword>
<keyword id="KW-0472">Membrane</keyword>
<keyword id="KW-0520">NAD</keyword>
<keyword id="KW-0874">Quinone</keyword>
<keyword id="KW-1278">Translocase</keyword>
<keyword id="KW-0813">Transport</keyword>
<keyword id="KW-0830">Ubiquinone</keyword>
<organism>
    <name type="scientific">Paraburkholderia phytofirmans (strain DSM 17436 / LMG 22146 / PsJN)</name>
    <name type="common">Burkholderia phytofirmans</name>
    <dbReference type="NCBI Taxonomy" id="398527"/>
    <lineage>
        <taxon>Bacteria</taxon>
        <taxon>Pseudomonadati</taxon>
        <taxon>Pseudomonadota</taxon>
        <taxon>Betaproteobacteria</taxon>
        <taxon>Burkholderiales</taxon>
        <taxon>Burkholderiaceae</taxon>
        <taxon>Paraburkholderia</taxon>
    </lineage>
</organism>
<name>NUOD_PARPJ</name>
<accession>B2T2F0</accession>
<reference key="1">
    <citation type="journal article" date="2011" name="J. Bacteriol.">
        <title>Complete genome sequence of the plant growth-promoting endophyte Burkholderia phytofirmans strain PsJN.</title>
        <authorList>
            <person name="Weilharter A."/>
            <person name="Mitter B."/>
            <person name="Shin M.V."/>
            <person name="Chain P.S."/>
            <person name="Nowak J."/>
            <person name="Sessitsch A."/>
        </authorList>
    </citation>
    <scope>NUCLEOTIDE SEQUENCE [LARGE SCALE GENOMIC DNA]</scope>
    <source>
        <strain>DSM 17436 / LMG 22146 / PsJN</strain>
    </source>
</reference>
<dbReference type="EC" id="7.1.1.-" evidence="1"/>
<dbReference type="EMBL" id="CP001052">
    <property type="protein sequence ID" value="ACD15761.1"/>
    <property type="molecule type" value="Genomic_DNA"/>
</dbReference>
<dbReference type="RefSeq" id="WP_012432378.1">
    <property type="nucleotide sequence ID" value="NC_010681.1"/>
</dbReference>
<dbReference type="SMR" id="B2T2F0"/>
<dbReference type="STRING" id="398527.Bphyt_1346"/>
<dbReference type="KEGG" id="bpy:Bphyt_1346"/>
<dbReference type="eggNOG" id="COG0649">
    <property type="taxonomic scope" value="Bacteria"/>
</dbReference>
<dbReference type="HOGENOM" id="CLU_015134_1_1_4"/>
<dbReference type="OrthoDB" id="9801496at2"/>
<dbReference type="Proteomes" id="UP000001739">
    <property type="component" value="Chromosome 1"/>
</dbReference>
<dbReference type="GO" id="GO:0005886">
    <property type="term" value="C:plasma membrane"/>
    <property type="evidence" value="ECO:0007669"/>
    <property type="project" value="UniProtKB-SubCell"/>
</dbReference>
<dbReference type="GO" id="GO:0051287">
    <property type="term" value="F:NAD binding"/>
    <property type="evidence" value="ECO:0007669"/>
    <property type="project" value="InterPro"/>
</dbReference>
<dbReference type="GO" id="GO:0050136">
    <property type="term" value="F:NADH:ubiquinone reductase (non-electrogenic) activity"/>
    <property type="evidence" value="ECO:0007669"/>
    <property type="project" value="UniProtKB-UniRule"/>
</dbReference>
<dbReference type="GO" id="GO:0048038">
    <property type="term" value="F:quinone binding"/>
    <property type="evidence" value="ECO:0007669"/>
    <property type="project" value="UniProtKB-KW"/>
</dbReference>
<dbReference type="FunFam" id="1.10.645.10:FF:000005">
    <property type="entry name" value="NADH-quinone oxidoreductase subunit D"/>
    <property type="match status" value="1"/>
</dbReference>
<dbReference type="Gene3D" id="1.10.645.10">
    <property type="entry name" value="Cytochrome-c3 Hydrogenase, chain B"/>
    <property type="match status" value="1"/>
</dbReference>
<dbReference type="HAMAP" id="MF_01358">
    <property type="entry name" value="NDH1_NuoD"/>
    <property type="match status" value="1"/>
</dbReference>
<dbReference type="InterPro" id="IPR001135">
    <property type="entry name" value="NADH_Q_OxRdtase_suD"/>
</dbReference>
<dbReference type="InterPro" id="IPR014029">
    <property type="entry name" value="NADH_UbQ_OxRdtase_49kDa_CS"/>
</dbReference>
<dbReference type="InterPro" id="IPR022885">
    <property type="entry name" value="NDH1_su_D/H"/>
</dbReference>
<dbReference type="InterPro" id="IPR029014">
    <property type="entry name" value="NiFe-Hase_large"/>
</dbReference>
<dbReference type="NCBIfam" id="TIGR01962">
    <property type="entry name" value="NuoD"/>
    <property type="match status" value="1"/>
</dbReference>
<dbReference type="NCBIfam" id="NF004739">
    <property type="entry name" value="PRK06075.1"/>
    <property type="match status" value="1"/>
</dbReference>
<dbReference type="PANTHER" id="PTHR11993:SF10">
    <property type="entry name" value="NADH DEHYDROGENASE [UBIQUINONE] IRON-SULFUR PROTEIN 2, MITOCHONDRIAL"/>
    <property type="match status" value="1"/>
</dbReference>
<dbReference type="PANTHER" id="PTHR11993">
    <property type="entry name" value="NADH-UBIQUINONE OXIDOREDUCTASE 49 KDA SUBUNIT"/>
    <property type="match status" value="1"/>
</dbReference>
<dbReference type="Pfam" id="PF00346">
    <property type="entry name" value="Complex1_49kDa"/>
    <property type="match status" value="1"/>
</dbReference>
<dbReference type="SUPFAM" id="SSF56762">
    <property type="entry name" value="HydB/Nqo4-like"/>
    <property type="match status" value="1"/>
</dbReference>
<dbReference type="PROSITE" id="PS00535">
    <property type="entry name" value="COMPLEX1_49K"/>
    <property type="match status" value="1"/>
</dbReference>
<feature type="chain" id="PRO_0000371834" description="NADH-quinone oxidoreductase subunit D">
    <location>
        <begin position="1"/>
        <end position="417"/>
    </location>
</feature>
<sequence length="417" mass="47566">MAEIKNYTLNFGPQHPAAHGVLRLVLELDGEVIQRADPHIGLLHRATEKLAETKTFIQSVPYMDRLDYVSMMVNEHGYVMAIEKLLGIEVPVRAQYIRVMFDEVTRVLNHLMWIGAHALDVGAMAVFLYAFREREDLMDVYEAVSGARMHAAYYRPGGVYRDLPDAMPQYKASKIRNAKALSKMNENRQGSLLDFIDDFFTRFPKCVDEYETLLTDNRIWKQRLVGIGVVSPERALNLGMTGAMLRGSGIEWDLRKKQPYEVYDKLDFDIPVGVNGDCYDRYLVRVEEMRQSTRIVKQCIEWLRKNPGPVMIDNHKVAPPSRVGMKSNMEELIHHFKLFTEGFHVPEGEAYAAVEHPKGEFGIYLISDGANKPYRLKIRAPGYAHLSTLDEMARGHMIADAVTIIGTQDIVFGEVDR</sequence>
<protein>
    <recommendedName>
        <fullName evidence="1">NADH-quinone oxidoreductase subunit D</fullName>
        <ecNumber evidence="1">7.1.1.-</ecNumber>
    </recommendedName>
    <alternativeName>
        <fullName evidence="1">NADH dehydrogenase I subunit D</fullName>
    </alternativeName>
    <alternativeName>
        <fullName evidence="1">NDH-1 subunit D</fullName>
    </alternativeName>
</protein>
<comment type="function">
    <text evidence="1">NDH-1 shuttles electrons from NADH, via FMN and iron-sulfur (Fe-S) centers, to quinones in the respiratory chain. The immediate electron acceptor for the enzyme in this species is believed to be ubiquinone. Couples the redox reaction to proton translocation (for every two electrons transferred, four hydrogen ions are translocated across the cytoplasmic membrane), and thus conserves the redox energy in a proton gradient.</text>
</comment>
<comment type="catalytic activity">
    <reaction evidence="1">
        <text>a quinone + NADH + 5 H(+)(in) = a quinol + NAD(+) + 4 H(+)(out)</text>
        <dbReference type="Rhea" id="RHEA:57888"/>
        <dbReference type="ChEBI" id="CHEBI:15378"/>
        <dbReference type="ChEBI" id="CHEBI:24646"/>
        <dbReference type="ChEBI" id="CHEBI:57540"/>
        <dbReference type="ChEBI" id="CHEBI:57945"/>
        <dbReference type="ChEBI" id="CHEBI:132124"/>
    </reaction>
</comment>
<comment type="subunit">
    <text evidence="1">NDH-1 is composed of 14 different subunits. Subunits NuoB, C, D, E, F, and G constitute the peripheral sector of the complex.</text>
</comment>
<comment type="subcellular location">
    <subcellularLocation>
        <location evidence="1">Cell inner membrane</location>
        <topology evidence="1">Peripheral membrane protein</topology>
        <orientation evidence="1">Cytoplasmic side</orientation>
    </subcellularLocation>
</comment>
<comment type="similarity">
    <text evidence="1">Belongs to the complex I 49 kDa subunit family.</text>
</comment>
<gene>
    <name evidence="1" type="primary">nuoD</name>
    <name type="ordered locus">Bphyt_1346</name>
</gene>